<reference evidence="3" key="1">
    <citation type="journal article" date="2005" name="Genome Res.">
        <title>Comparative genome sequencing of Drosophila pseudoobscura: chromosomal, gene, and cis-element evolution.</title>
        <authorList>
            <person name="Richards S."/>
            <person name="Liu Y."/>
            <person name="Bettencourt B.R."/>
            <person name="Hradecky P."/>
            <person name="Letovsky S."/>
            <person name="Nielsen R."/>
            <person name="Thornton K."/>
            <person name="Hubisz M.J."/>
            <person name="Chen R."/>
            <person name="Meisel R.P."/>
            <person name="Couronne O."/>
            <person name="Hua S."/>
            <person name="Smith M.A."/>
            <person name="Zhang P."/>
            <person name="Liu J."/>
            <person name="Bussemaker H.J."/>
            <person name="van Batenburg M.F."/>
            <person name="Howells S.L."/>
            <person name="Scherer S.E."/>
            <person name="Sodergren E."/>
            <person name="Matthews B.B."/>
            <person name="Crosby M.A."/>
            <person name="Schroeder A.J."/>
            <person name="Ortiz-Barrientos D."/>
            <person name="Rives C.M."/>
            <person name="Metzker M.L."/>
            <person name="Muzny D.M."/>
            <person name="Scott G."/>
            <person name="Steffen D."/>
            <person name="Wheeler D.A."/>
            <person name="Worley K.C."/>
            <person name="Havlak P."/>
            <person name="Durbin K.J."/>
            <person name="Egan A."/>
            <person name="Gill R."/>
            <person name="Hume J."/>
            <person name="Morgan M.B."/>
            <person name="Miner G."/>
            <person name="Hamilton C."/>
            <person name="Huang Y."/>
            <person name="Waldron L."/>
            <person name="Verduzco D."/>
            <person name="Clerc-Blankenburg K.P."/>
            <person name="Dubchak I."/>
            <person name="Noor M.A.F."/>
            <person name="Anderson W."/>
            <person name="White K.P."/>
            <person name="Clark A.G."/>
            <person name="Schaeffer S.W."/>
            <person name="Gelbart W.M."/>
            <person name="Weinstock G.M."/>
            <person name="Gibbs R.A."/>
        </authorList>
    </citation>
    <scope>NUCLEOTIDE SEQUENCE [LARGE SCALE GENOMIC DNA]</scope>
    <source>
        <strain>MV2-25 / Tucson 14011-0121.94</strain>
    </source>
</reference>
<protein>
    <recommendedName>
        <fullName>Protein Turandot X</fullName>
    </recommendedName>
</protein>
<evidence type="ECO:0000250" key="1">
    <source>
        <dbReference type="UniProtKB" id="Q8IN41"/>
    </source>
</evidence>
<evidence type="ECO:0000255" key="2"/>
<evidence type="ECO:0000312" key="3">
    <source>
        <dbReference type="EMBL" id="EAL27757.2"/>
    </source>
</evidence>
<organism>
    <name type="scientific">Drosophila pseudoobscura pseudoobscura</name>
    <name type="common">Fruit fly</name>
    <dbReference type="NCBI Taxonomy" id="46245"/>
    <lineage>
        <taxon>Eukaryota</taxon>
        <taxon>Metazoa</taxon>
        <taxon>Ecdysozoa</taxon>
        <taxon>Arthropoda</taxon>
        <taxon>Hexapoda</taxon>
        <taxon>Insecta</taxon>
        <taxon>Pterygota</taxon>
        <taxon>Neoptera</taxon>
        <taxon>Endopterygota</taxon>
        <taxon>Diptera</taxon>
        <taxon>Brachycera</taxon>
        <taxon>Muscomorpha</taxon>
        <taxon>Ephydroidea</taxon>
        <taxon>Drosophilidae</taxon>
        <taxon>Drosophila</taxon>
        <taxon>Sophophora</taxon>
    </lineage>
</organism>
<name>TOTX_DROPS</name>
<dbReference type="EMBL" id="CM000070">
    <property type="protein sequence ID" value="EAL27757.2"/>
    <property type="molecule type" value="Genomic_DNA"/>
</dbReference>
<dbReference type="RefSeq" id="XP_001358616.2">
    <property type="nucleotide sequence ID" value="XM_001358579.3"/>
</dbReference>
<dbReference type="SMR" id="Q299E6"/>
<dbReference type="FunCoup" id="Q299E6">
    <property type="interactions" value="31"/>
</dbReference>
<dbReference type="EnsemblMetazoa" id="FBtr0283695">
    <property type="protein sequence ID" value="FBpp0282133"/>
    <property type="gene ID" value="FBgn0076097"/>
</dbReference>
<dbReference type="GeneID" id="4801542"/>
<dbReference type="KEGG" id="dpo:4801542"/>
<dbReference type="CTD" id="117460"/>
<dbReference type="HOGENOM" id="CLU_158853_0_0_1"/>
<dbReference type="InParanoid" id="Q299E6"/>
<dbReference type="OMA" id="QERSYAN"/>
<dbReference type="Proteomes" id="UP000001819">
    <property type="component" value="Chromosome 2"/>
</dbReference>
<dbReference type="Bgee" id="FBgn0076097">
    <property type="expression patterns" value="Expressed in insect adult head and 1 other cell type or tissue"/>
</dbReference>
<dbReference type="GO" id="GO:0005615">
    <property type="term" value="C:extracellular space"/>
    <property type="evidence" value="ECO:0000250"/>
    <property type="project" value="UniProtKB"/>
</dbReference>
<dbReference type="GO" id="GO:0034605">
    <property type="term" value="P:cellular response to heat"/>
    <property type="evidence" value="ECO:0007669"/>
    <property type="project" value="UniProtKB-ARBA"/>
</dbReference>
<dbReference type="GO" id="GO:0045087">
    <property type="term" value="P:innate immune response"/>
    <property type="evidence" value="ECO:0007669"/>
    <property type="project" value="UniProtKB-KW"/>
</dbReference>
<dbReference type="GO" id="GO:0009617">
    <property type="term" value="P:response to bacterium"/>
    <property type="evidence" value="ECO:0000250"/>
    <property type="project" value="UniProtKB"/>
</dbReference>
<dbReference type="GO" id="GO:0009408">
    <property type="term" value="P:response to heat"/>
    <property type="evidence" value="ECO:0000250"/>
    <property type="project" value="UniProtKB"/>
</dbReference>
<dbReference type="GO" id="GO:0006979">
    <property type="term" value="P:response to oxidative stress"/>
    <property type="evidence" value="ECO:0000250"/>
    <property type="project" value="UniProtKB"/>
</dbReference>
<dbReference type="InterPro" id="IPR010825">
    <property type="entry name" value="Turandot"/>
</dbReference>
<dbReference type="Pfam" id="PF07240">
    <property type="entry name" value="Turandot"/>
    <property type="match status" value="1"/>
</dbReference>
<feature type="signal peptide" evidence="2">
    <location>
        <begin position="1"/>
        <end position="24"/>
    </location>
</feature>
<feature type="chain" id="PRO_0000355002" description="Protein Turandot X">
    <location>
        <begin position="25"/>
        <end position="137"/>
    </location>
</feature>
<gene>
    <name evidence="1" type="primary">TotX</name>
    <name type="ORF">GA16081</name>
</gene>
<proteinExistence type="inferred from homology"/>
<accession>Q299E6</accession>
<sequence length="137" mass="15596">MRVPVFQLSCLLGLIVCLLCSVKAQKDDQYDTEKSRILEIYNNPAVDEFTKERNIPKLIEFYRRYPARIQLPDADKRQWDEFVARYTESQTKLVDGLPAQGGWVGSVLSSTVGNLIAKFIFSLIRYDPTTPKPIGAP</sequence>
<comment type="function">
    <text evidence="1">A humoral factor that may play a role in stress tolerance.</text>
</comment>
<comment type="subcellular location">
    <subcellularLocation>
        <location evidence="1">Secreted</location>
    </subcellularLocation>
</comment>
<comment type="similarity">
    <text evidence="2">Belongs to the Turandot family.</text>
</comment>
<keyword id="KW-0391">Immunity</keyword>
<keyword id="KW-0399">Innate immunity</keyword>
<keyword id="KW-1185">Reference proteome</keyword>
<keyword id="KW-0964">Secreted</keyword>
<keyword id="KW-0732">Signal</keyword>